<gene>
    <name evidence="1" type="primary">rpoC2</name>
</gene>
<reference key="1">
    <citation type="journal article" date="2006" name="BMC Genomics">
        <title>The complete chloroplast genome sequence of Gossypium hirsutum: organization and phylogenetic relationships to other angiosperms.</title>
        <authorList>
            <person name="Lee S.-B."/>
            <person name="Kaittanis C."/>
            <person name="Jansen R.K."/>
            <person name="Hostetler J.B."/>
            <person name="Tallon L.J."/>
            <person name="Town C.D."/>
            <person name="Daniell H."/>
        </authorList>
    </citation>
    <scope>NUCLEOTIDE SEQUENCE [LARGE SCALE GENOMIC DNA]</scope>
    <source>
        <strain>cv. Coker 310FR</strain>
    </source>
</reference>
<dbReference type="EC" id="2.7.7.6" evidence="1"/>
<dbReference type="EMBL" id="DQ345959">
    <property type="protein sequence ID" value="ABC73618.1"/>
    <property type="molecule type" value="Genomic_DNA"/>
</dbReference>
<dbReference type="RefSeq" id="YP_538925.1">
    <property type="nucleotide sequence ID" value="NC_007944.1"/>
</dbReference>
<dbReference type="SMR" id="Q2L8Z5"/>
<dbReference type="GeneID" id="3989195"/>
<dbReference type="KEGG" id="ghi:3989195"/>
<dbReference type="OrthoDB" id="15494at41938"/>
<dbReference type="Proteomes" id="UP000189702">
    <property type="component" value="Chloroplast Pltd"/>
</dbReference>
<dbReference type="GO" id="GO:0009507">
    <property type="term" value="C:chloroplast"/>
    <property type="evidence" value="ECO:0007669"/>
    <property type="project" value="UniProtKB-SubCell"/>
</dbReference>
<dbReference type="GO" id="GO:0000428">
    <property type="term" value="C:DNA-directed RNA polymerase complex"/>
    <property type="evidence" value="ECO:0007669"/>
    <property type="project" value="UniProtKB-KW"/>
</dbReference>
<dbReference type="GO" id="GO:0005739">
    <property type="term" value="C:mitochondrion"/>
    <property type="evidence" value="ECO:0007669"/>
    <property type="project" value="GOC"/>
</dbReference>
<dbReference type="GO" id="GO:0003677">
    <property type="term" value="F:DNA binding"/>
    <property type="evidence" value="ECO:0007669"/>
    <property type="project" value="UniProtKB-UniRule"/>
</dbReference>
<dbReference type="GO" id="GO:0003899">
    <property type="term" value="F:DNA-directed RNA polymerase activity"/>
    <property type="evidence" value="ECO:0007669"/>
    <property type="project" value="UniProtKB-UniRule"/>
</dbReference>
<dbReference type="GO" id="GO:0008270">
    <property type="term" value="F:zinc ion binding"/>
    <property type="evidence" value="ECO:0007669"/>
    <property type="project" value="UniProtKB-UniRule"/>
</dbReference>
<dbReference type="GO" id="GO:0006351">
    <property type="term" value="P:DNA-templated transcription"/>
    <property type="evidence" value="ECO:0007669"/>
    <property type="project" value="UniProtKB-UniRule"/>
</dbReference>
<dbReference type="CDD" id="cd02655">
    <property type="entry name" value="RNAP_beta'_C"/>
    <property type="match status" value="1"/>
</dbReference>
<dbReference type="FunFam" id="1.10.132.30:FF:000002">
    <property type="entry name" value="DNA-directed RNA polymerase subunit beta"/>
    <property type="match status" value="1"/>
</dbReference>
<dbReference type="FunFam" id="1.10.1790.20:FF:000002">
    <property type="entry name" value="DNA-directed RNA polymerase subunit beta"/>
    <property type="match status" value="1"/>
</dbReference>
<dbReference type="Gene3D" id="1.10.132.30">
    <property type="match status" value="1"/>
</dbReference>
<dbReference type="Gene3D" id="1.10.150.390">
    <property type="match status" value="1"/>
</dbReference>
<dbReference type="Gene3D" id="1.10.1790.20">
    <property type="match status" value="1"/>
</dbReference>
<dbReference type="Gene3D" id="1.10.274.100">
    <property type="entry name" value="RNA polymerase Rpb1, domain 3"/>
    <property type="match status" value="1"/>
</dbReference>
<dbReference type="HAMAP" id="MF_01324">
    <property type="entry name" value="RNApol_bact_RpoC2"/>
    <property type="match status" value="1"/>
</dbReference>
<dbReference type="InterPro" id="IPR012756">
    <property type="entry name" value="DNA-dir_RpoC2_beta_pp"/>
</dbReference>
<dbReference type="InterPro" id="IPR050254">
    <property type="entry name" value="RNA_pol_beta''_euk"/>
</dbReference>
<dbReference type="InterPro" id="IPR042102">
    <property type="entry name" value="RNA_pol_Rpb1_3_sf"/>
</dbReference>
<dbReference type="InterPro" id="IPR007083">
    <property type="entry name" value="RNA_pol_Rpb1_4"/>
</dbReference>
<dbReference type="InterPro" id="IPR007081">
    <property type="entry name" value="RNA_pol_Rpb1_5"/>
</dbReference>
<dbReference type="InterPro" id="IPR038120">
    <property type="entry name" value="Rpb1_funnel_sf"/>
</dbReference>
<dbReference type="NCBIfam" id="TIGR02388">
    <property type="entry name" value="rpoC2_cyan"/>
    <property type="match status" value="1"/>
</dbReference>
<dbReference type="PANTHER" id="PTHR34995">
    <property type="entry name" value="DNA-DIRECTED RNA POLYMERASE SUBUNIT BETA"/>
    <property type="match status" value="1"/>
</dbReference>
<dbReference type="PANTHER" id="PTHR34995:SF1">
    <property type="entry name" value="DNA-DIRECTED RNA POLYMERASE SUBUNIT BETA"/>
    <property type="match status" value="1"/>
</dbReference>
<dbReference type="Pfam" id="PF05000">
    <property type="entry name" value="RNA_pol_Rpb1_4"/>
    <property type="match status" value="1"/>
</dbReference>
<dbReference type="Pfam" id="PF04998">
    <property type="entry name" value="RNA_pol_Rpb1_5"/>
    <property type="match status" value="2"/>
</dbReference>
<dbReference type="SUPFAM" id="SSF64484">
    <property type="entry name" value="beta and beta-prime subunits of DNA dependent RNA-polymerase"/>
    <property type="match status" value="1"/>
</dbReference>
<geneLocation type="chloroplast"/>
<sequence length="1393" mass="158638">MAERANLVFHNKVIDGTAIKRLISRLIDHFGMAYTSHILDQVKALGFQQATATSISLGIDDLLTIPSKGWLVQDAEQQSLILEKHHHFGNVHAVEKLRQSIEIWYATSEYLRQEMNPNFRMTDPFNPVHIMSFSGARGNASQVHQLVGMRGLMSDPQGQMIDLPIQSNLREGLSLTEYIISCYGARKGVVDTAVRTSDAGYLTRRLVEVVQHIVVRRTDCGTTRGISVSPQKRTLPERIFIQTLIGRVLADDIYMGPRCIAIRNQDIGLGLVDRFRAFRTQPISIRTPFTCRSTSWICRLCYGRSPTHGDLVELGEAVGIIAGQSIGEPGTQLTLRTFHTGGVFTGGTAEHVRAPFNGKIKFNEDLVHPTRTRHGHPAFLCYRDLYVIIESEDIIHKVAIPPKSFLLVQNDQYVESEQVIAEIRAGTYTLNLKERVRKHIYSDSEGEMHWSTDVYHSPEFTYSNVHLLPKTSHLWILSGGSYKFSVVPFSLHKDQDQISIHYLSAERRYISRFSVNNDQVRHNLFSSDFSDKKEERIYDYSELNRIIGTGHCDFIYSAILHENADLLAKRRRNRFIIPFQLIQDQEKELMLHSHSGISMEIPINGIFRRKSILAFFDDPRYRRKSSGITKYGTLGAHSIVKREDVIEYRGVKKVKPKYQMKVDRFFFIPEEVHILSESSSIMVRNNSIIGVDTPITLNTRSQVGGLVRVERKKKRIELKIFSGNIYFPGERDKISRHSGILIPPGTGKTNSKESKKLKNWIYVQRITPTKKKYFVLVRPVTPYEIPDGLNLATLFPQDPFQEKDNMQLRAVNYILYGNGKPTRRISDTSIQLVRTCLVLSWDQDNKSSFAEEVCASFVEVRTNGLIRDFLRIDLVKSHIFYIRKRNDPSGSELISDNRSDRTNKNPFYSIYSNARIQQSFSQNHGTIHTLLNRNKESQSLIILSASNCFRMGPFNDVKYHNVIKQSIKKDPLIPIKNLLGPLGTAPKIANFYSSFYPLITHNQTSVAKYFELDNLKQAFQVLNYYLIAENGRIYNFDPCRNIFLNAVNLNWYFPHHHYHHNYCEETSTIISLGQFICENVCIAKSGPRLKSGQVFIVQADSIVIRSAKPYLATPGATVHGHYGETLYEGDTLVTFIYEKSRSGDITQGLPKVEQVLEVRSIDSISMNLEKRIEGWNECITRILGIPWGFVIGAELTIVQSRLSLVNKIQKVYRSQGVQIHNRHIEIIVRQITSKVLVSEDGMSNVFLPGELIGLLRAERTGRALEEAICYRAVLLGITRASLNTQSFISEASFQETARVLAKAALRGRIDWLKGLKENVVLGGMIPAGTGFKGLVHRSRQHNNILLETKKKNFFGGEMRDIFFHHRELFDSCISNNLHDTSGRSFIGIEFNDS</sequence>
<protein>
    <recommendedName>
        <fullName evidence="1">DNA-directed RNA polymerase subunit beta''</fullName>
        <ecNumber evidence="1">2.7.7.6</ecNumber>
    </recommendedName>
    <alternativeName>
        <fullName evidence="1">PEP</fullName>
    </alternativeName>
    <alternativeName>
        <fullName evidence="1">Plastid-encoded RNA polymerase subunit beta''</fullName>
        <shortName evidence="1">RNA polymerase subunit beta''</shortName>
    </alternativeName>
</protein>
<feature type="chain" id="PRO_0000277191" description="DNA-directed RNA polymerase subunit beta''">
    <location>
        <begin position="1"/>
        <end position="1393"/>
    </location>
</feature>
<feature type="binding site" evidence="1">
    <location>
        <position position="220"/>
    </location>
    <ligand>
        <name>Zn(2+)</name>
        <dbReference type="ChEBI" id="CHEBI:29105"/>
    </ligand>
</feature>
<feature type="binding site" evidence="1">
    <location>
        <position position="291"/>
    </location>
    <ligand>
        <name>Zn(2+)</name>
        <dbReference type="ChEBI" id="CHEBI:29105"/>
    </ligand>
</feature>
<feature type="binding site" evidence="1">
    <location>
        <position position="298"/>
    </location>
    <ligand>
        <name>Zn(2+)</name>
        <dbReference type="ChEBI" id="CHEBI:29105"/>
    </ligand>
</feature>
<feature type="binding site" evidence="1">
    <location>
        <position position="301"/>
    </location>
    <ligand>
        <name>Zn(2+)</name>
        <dbReference type="ChEBI" id="CHEBI:29105"/>
    </ligand>
</feature>
<comment type="function">
    <text evidence="1">DNA-dependent RNA polymerase catalyzes the transcription of DNA into RNA using the four ribonucleoside triphosphates as substrates.</text>
</comment>
<comment type="catalytic activity">
    <reaction evidence="1">
        <text>RNA(n) + a ribonucleoside 5'-triphosphate = RNA(n+1) + diphosphate</text>
        <dbReference type="Rhea" id="RHEA:21248"/>
        <dbReference type="Rhea" id="RHEA-COMP:14527"/>
        <dbReference type="Rhea" id="RHEA-COMP:17342"/>
        <dbReference type="ChEBI" id="CHEBI:33019"/>
        <dbReference type="ChEBI" id="CHEBI:61557"/>
        <dbReference type="ChEBI" id="CHEBI:140395"/>
        <dbReference type="EC" id="2.7.7.6"/>
    </reaction>
</comment>
<comment type="cofactor">
    <cofactor evidence="1">
        <name>Zn(2+)</name>
        <dbReference type="ChEBI" id="CHEBI:29105"/>
    </cofactor>
    <text evidence="1">Binds 1 Zn(2+) ion per subunit.</text>
</comment>
<comment type="subunit">
    <text evidence="1">In plastids the minimal PEP RNA polymerase catalytic core is composed of four subunits: alpha, beta, beta', and beta''. When a (nuclear-encoded) sigma factor is associated with the core the holoenzyme is formed, which can initiate transcription.</text>
</comment>
<comment type="subcellular location">
    <subcellularLocation>
        <location evidence="1">Plastid</location>
        <location evidence="1">Chloroplast</location>
    </subcellularLocation>
</comment>
<comment type="similarity">
    <text evidence="1">Belongs to the RNA polymerase beta' chain family. RpoC2 subfamily.</text>
</comment>
<organism>
    <name type="scientific">Gossypium hirsutum</name>
    <name type="common">Upland cotton</name>
    <name type="synonym">Gossypium mexicanum</name>
    <dbReference type="NCBI Taxonomy" id="3635"/>
    <lineage>
        <taxon>Eukaryota</taxon>
        <taxon>Viridiplantae</taxon>
        <taxon>Streptophyta</taxon>
        <taxon>Embryophyta</taxon>
        <taxon>Tracheophyta</taxon>
        <taxon>Spermatophyta</taxon>
        <taxon>Magnoliopsida</taxon>
        <taxon>eudicotyledons</taxon>
        <taxon>Gunneridae</taxon>
        <taxon>Pentapetalae</taxon>
        <taxon>rosids</taxon>
        <taxon>malvids</taxon>
        <taxon>Malvales</taxon>
        <taxon>Malvaceae</taxon>
        <taxon>Malvoideae</taxon>
        <taxon>Gossypium</taxon>
    </lineage>
</organism>
<name>RPOC2_GOSHI</name>
<evidence type="ECO:0000255" key="1">
    <source>
        <dbReference type="HAMAP-Rule" id="MF_01324"/>
    </source>
</evidence>
<keyword id="KW-0150">Chloroplast</keyword>
<keyword id="KW-0240">DNA-directed RNA polymerase</keyword>
<keyword id="KW-0479">Metal-binding</keyword>
<keyword id="KW-0548">Nucleotidyltransferase</keyword>
<keyword id="KW-0934">Plastid</keyword>
<keyword id="KW-1185">Reference proteome</keyword>
<keyword id="KW-0804">Transcription</keyword>
<keyword id="KW-0808">Transferase</keyword>
<keyword id="KW-0862">Zinc</keyword>
<accession>Q2L8Z5</accession>
<proteinExistence type="inferred from homology"/>